<accession>B4TJA0</accession>
<keyword id="KW-0479">Metal-binding</keyword>
<keyword id="KW-0521">NADP</keyword>
<keyword id="KW-0560">Oxidoreductase</keyword>
<keyword id="KW-0630">Potassium</keyword>
<comment type="function">
    <text evidence="1">Catalyzes the irreversible NADPH-dependent deamination of GMP to IMP. It functions in the conversion of nucleobase, nucleoside and nucleotide derivatives of G to A nucleotides, and in maintaining the intracellular balance of A and G nucleotides.</text>
</comment>
<comment type="catalytic activity">
    <reaction evidence="1">
        <text>IMP + NH4(+) + NADP(+) = GMP + NADPH + 2 H(+)</text>
        <dbReference type="Rhea" id="RHEA:17185"/>
        <dbReference type="ChEBI" id="CHEBI:15378"/>
        <dbReference type="ChEBI" id="CHEBI:28938"/>
        <dbReference type="ChEBI" id="CHEBI:57783"/>
        <dbReference type="ChEBI" id="CHEBI:58053"/>
        <dbReference type="ChEBI" id="CHEBI:58115"/>
        <dbReference type="ChEBI" id="CHEBI:58349"/>
        <dbReference type="EC" id="1.7.1.7"/>
    </reaction>
</comment>
<comment type="subunit">
    <text evidence="1">Homotetramer.</text>
</comment>
<comment type="similarity">
    <text evidence="1">Belongs to the IMPDH/GMPR family. GuaC type 1 subfamily.</text>
</comment>
<protein>
    <recommendedName>
        <fullName evidence="1">GMP reductase</fullName>
        <ecNumber evidence="1">1.7.1.7</ecNumber>
    </recommendedName>
    <alternativeName>
        <fullName evidence="1">Guanosine 5'-monophosphate oxidoreductase</fullName>
        <shortName evidence="1">Guanosine monophosphate reductase</shortName>
    </alternativeName>
</protein>
<sequence length="347" mass="37139">MRIEEDLKLGFKDVLIRPKRSTLKSRSDVELERQFTFKHSGQTWSGVPIIAANMDTVGTFEMAQALAGFDILTAVHKHYTVEEWAAFINTASADVLKHVMVSTGTSDADFEKTVQILALNPALNFVCIDVANGYSEHFVQFVAKAREAWPTKTICAGNVVTGEMCEELILSGADIVKVGIGPGSVCTTRVKTGVGYPQLSAVIECADAAHGLGGMIVSDGGCTMPGDVAKAFGGGADFVMLGGMLAGHEESGGSVVEENGEKFMLFYGMSSESAMNRHVGGVAKYRAAEGKTVKLPLRGPVGNTARDILGGLRSACTYVGASRLKELTKRTTFIRVQEQENRIFNSL</sequence>
<evidence type="ECO:0000255" key="1">
    <source>
        <dbReference type="HAMAP-Rule" id="MF_00596"/>
    </source>
</evidence>
<reference key="1">
    <citation type="journal article" date="2011" name="J. Bacteriol.">
        <title>Comparative genomics of 28 Salmonella enterica isolates: evidence for CRISPR-mediated adaptive sublineage evolution.</title>
        <authorList>
            <person name="Fricke W.F."/>
            <person name="Mammel M.K."/>
            <person name="McDermott P.F."/>
            <person name="Tartera C."/>
            <person name="White D.G."/>
            <person name="Leclerc J.E."/>
            <person name="Ravel J."/>
            <person name="Cebula T.A."/>
        </authorList>
    </citation>
    <scope>NUCLEOTIDE SEQUENCE [LARGE SCALE GENOMIC DNA]</scope>
    <source>
        <strain>SL476</strain>
    </source>
</reference>
<gene>
    <name evidence="1" type="primary">guaC</name>
    <name type="ordered locus">SeHA_C0155</name>
</gene>
<organism>
    <name type="scientific">Salmonella heidelberg (strain SL476)</name>
    <dbReference type="NCBI Taxonomy" id="454169"/>
    <lineage>
        <taxon>Bacteria</taxon>
        <taxon>Pseudomonadati</taxon>
        <taxon>Pseudomonadota</taxon>
        <taxon>Gammaproteobacteria</taxon>
        <taxon>Enterobacterales</taxon>
        <taxon>Enterobacteriaceae</taxon>
        <taxon>Salmonella</taxon>
    </lineage>
</organism>
<dbReference type="EC" id="1.7.1.7" evidence="1"/>
<dbReference type="EMBL" id="CP001120">
    <property type="protein sequence ID" value="ACF69085.1"/>
    <property type="molecule type" value="Genomic_DNA"/>
</dbReference>
<dbReference type="RefSeq" id="WP_001217365.1">
    <property type="nucleotide sequence ID" value="NC_011083.1"/>
</dbReference>
<dbReference type="SMR" id="B4TJA0"/>
<dbReference type="KEGG" id="seh:SeHA_C0155"/>
<dbReference type="HOGENOM" id="CLU_022552_5_3_6"/>
<dbReference type="Proteomes" id="UP000001866">
    <property type="component" value="Chromosome"/>
</dbReference>
<dbReference type="GO" id="GO:0005829">
    <property type="term" value="C:cytosol"/>
    <property type="evidence" value="ECO:0007669"/>
    <property type="project" value="TreeGrafter"/>
</dbReference>
<dbReference type="GO" id="GO:1902560">
    <property type="term" value="C:GMP reductase complex"/>
    <property type="evidence" value="ECO:0007669"/>
    <property type="project" value="InterPro"/>
</dbReference>
<dbReference type="GO" id="GO:0003920">
    <property type="term" value="F:GMP reductase activity"/>
    <property type="evidence" value="ECO:0007669"/>
    <property type="project" value="UniProtKB-UniRule"/>
</dbReference>
<dbReference type="GO" id="GO:0046872">
    <property type="term" value="F:metal ion binding"/>
    <property type="evidence" value="ECO:0007669"/>
    <property type="project" value="UniProtKB-KW"/>
</dbReference>
<dbReference type="GO" id="GO:0006163">
    <property type="term" value="P:purine nucleotide metabolic process"/>
    <property type="evidence" value="ECO:0007669"/>
    <property type="project" value="UniProtKB-UniRule"/>
</dbReference>
<dbReference type="CDD" id="cd00381">
    <property type="entry name" value="IMPDH"/>
    <property type="match status" value="1"/>
</dbReference>
<dbReference type="FunFam" id="3.20.20.70:FF:000012">
    <property type="entry name" value="GMP reductase"/>
    <property type="match status" value="1"/>
</dbReference>
<dbReference type="Gene3D" id="3.20.20.70">
    <property type="entry name" value="Aldolase class I"/>
    <property type="match status" value="1"/>
</dbReference>
<dbReference type="HAMAP" id="MF_00596">
    <property type="entry name" value="GMP_reduct_type1"/>
    <property type="match status" value="1"/>
</dbReference>
<dbReference type="InterPro" id="IPR013785">
    <property type="entry name" value="Aldolase_TIM"/>
</dbReference>
<dbReference type="InterPro" id="IPR050139">
    <property type="entry name" value="GMP_reductase"/>
</dbReference>
<dbReference type="InterPro" id="IPR005993">
    <property type="entry name" value="GMPR"/>
</dbReference>
<dbReference type="InterPro" id="IPR015875">
    <property type="entry name" value="IMP_DH/GMP_Rdtase_CS"/>
</dbReference>
<dbReference type="InterPro" id="IPR001093">
    <property type="entry name" value="IMP_DH_GMPRt"/>
</dbReference>
<dbReference type="NCBIfam" id="TIGR01305">
    <property type="entry name" value="GMP_reduct_1"/>
    <property type="match status" value="1"/>
</dbReference>
<dbReference type="NCBIfam" id="NF003470">
    <property type="entry name" value="PRK05096.1"/>
    <property type="match status" value="1"/>
</dbReference>
<dbReference type="PANTHER" id="PTHR43170">
    <property type="entry name" value="GMP REDUCTASE"/>
    <property type="match status" value="1"/>
</dbReference>
<dbReference type="PANTHER" id="PTHR43170:SF5">
    <property type="entry name" value="GMP REDUCTASE"/>
    <property type="match status" value="1"/>
</dbReference>
<dbReference type="Pfam" id="PF00478">
    <property type="entry name" value="IMPDH"/>
    <property type="match status" value="1"/>
</dbReference>
<dbReference type="PIRSF" id="PIRSF000235">
    <property type="entry name" value="GMP_reductase"/>
    <property type="match status" value="1"/>
</dbReference>
<dbReference type="SMART" id="SM01240">
    <property type="entry name" value="IMPDH"/>
    <property type="match status" value="1"/>
</dbReference>
<dbReference type="SUPFAM" id="SSF51412">
    <property type="entry name" value="Inosine monophosphate dehydrogenase (IMPDH)"/>
    <property type="match status" value="1"/>
</dbReference>
<dbReference type="PROSITE" id="PS00487">
    <property type="entry name" value="IMP_DH_GMP_RED"/>
    <property type="match status" value="1"/>
</dbReference>
<proteinExistence type="inferred from homology"/>
<feature type="chain" id="PRO_1000129864" description="GMP reductase">
    <location>
        <begin position="1"/>
        <end position="347"/>
    </location>
</feature>
<feature type="active site" description="Thioimidate intermediate" evidence="1">
    <location>
        <position position="186"/>
    </location>
</feature>
<feature type="binding site" evidence="1">
    <location>
        <begin position="108"/>
        <end position="131"/>
    </location>
    <ligand>
        <name>NADP(+)</name>
        <dbReference type="ChEBI" id="CHEBI:58349"/>
    </ligand>
</feature>
<feature type="binding site" evidence="1">
    <location>
        <position position="181"/>
    </location>
    <ligand>
        <name>K(+)</name>
        <dbReference type="ChEBI" id="CHEBI:29103"/>
    </ligand>
</feature>
<feature type="binding site" evidence="1">
    <location>
        <position position="183"/>
    </location>
    <ligand>
        <name>K(+)</name>
        <dbReference type="ChEBI" id="CHEBI:29103"/>
    </ligand>
</feature>
<feature type="binding site" evidence="1">
    <location>
        <begin position="216"/>
        <end position="239"/>
    </location>
    <ligand>
        <name>NADP(+)</name>
        <dbReference type="ChEBI" id="CHEBI:58349"/>
    </ligand>
</feature>
<name>GUAC_SALHS</name>